<dbReference type="EC" id="2.7.2.17" evidence="1"/>
<dbReference type="EC" id="2.7.2.19" evidence="1"/>
<dbReference type="EMBL" id="AJ248284">
    <property type="protein sequence ID" value="CAB49364.1"/>
    <property type="status" value="ALT_INIT"/>
    <property type="molecule type" value="Genomic_DNA"/>
</dbReference>
<dbReference type="EMBL" id="HE613800">
    <property type="protein sequence ID" value="CCE69824.1"/>
    <property type="molecule type" value="Genomic_DNA"/>
</dbReference>
<dbReference type="PIR" id="E75160">
    <property type="entry name" value="E75160"/>
</dbReference>
<dbReference type="RefSeq" id="WP_048146556.1">
    <property type="nucleotide sequence ID" value="NC_000868.1"/>
</dbReference>
<dbReference type="SMR" id="Q9V1I5"/>
<dbReference type="STRING" id="272844.PAB0292"/>
<dbReference type="KEGG" id="pab:PAB0292"/>
<dbReference type="PATRIC" id="fig|272844.11.peg.468"/>
<dbReference type="eggNOG" id="arCOG00862">
    <property type="taxonomic scope" value="Archaea"/>
</dbReference>
<dbReference type="HOGENOM" id="CLU_053680_2_0_2"/>
<dbReference type="OrthoDB" id="6816at2157"/>
<dbReference type="UniPathway" id="UPA00033">
    <property type="reaction ID" value="UER00036"/>
</dbReference>
<dbReference type="UniPathway" id="UPA00068"/>
<dbReference type="Proteomes" id="UP000000810">
    <property type="component" value="Chromosome"/>
</dbReference>
<dbReference type="Proteomes" id="UP000009139">
    <property type="component" value="Chromosome"/>
</dbReference>
<dbReference type="GO" id="GO:0005737">
    <property type="term" value="C:cytoplasm"/>
    <property type="evidence" value="ECO:0007669"/>
    <property type="project" value="UniProtKB-SubCell"/>
</dbReference>
<dbReference type="GO" id="GO:0003991">
    <property type="term" value="F:acetylglutamate kinase activity"/>
    <property type="evidence" value="ECO:0007669"/>
    <property type="project" value="TreeGrafter"/>
</dbReference>
<dbReference type="GO" id="GO:0005524">
    <property type="term" value="F:ATP binding"/>
    <property type="evidence" value="ECO:0007669"/>
    <property type="project" value="UniProtKB-KW"/>
</dbReference>
<dbReference type="GO" id="GO:0043744">
    <property type="term" value="F:N2-acetyl-L-aminoadipate kinase activity"/>
    <property type="evidence" value="ECO:0007669"/>
    <property type="project" value="RHEA"/>
</dbReference>
<dbReference type="GO" id="GO:0042450">
    <property type="term" value="P:arginine biosynthetic process via ornithine"/>
    <property type="evidence" value="ECO:0007669"/>
    <property type="project" value="UniProtKB-UniRule"/>
</dbReference>
<dbReference type="GO" id="GO:0006526">
    <property type="term" value="P:L-arginine biosynthetic process"/>
    <property type="evidence" value="ECO:0007669"/>
    <property type="project" value="UniProtKB-UniPathway"/>
</dbReference>
<dbReference type="GO" id="GO:0019878">
    <property type="term" value="P:lysine biosynthetic process via aminoadipic acid"/>
    <property type="evidence" value="ECO:0007669"/>
    <property type="project" value="UniProtKB-UniRule"/>
</dbReference>
<dbReference type="Gene3D" id="3.40.1160.10">
    <property type="entry name" value="Acetylglutamate kinase-like"/>
    <property type="match status" value="1"/>
</dbReference>
<dbReference type="HAMAP" id="MF_02082">
    <property type="entry name" value="LysZ"/>
    <property type="match status" value="1"/>
</dbReference>
<dbReference type="InterPro" id="IPR036393">
    <property type="entry name" value="AceGlu_kinase-like_sf"/>
</dbReference>
<dbReference type="InterPro" id="IPR004662">
    <property type="entry name" value="AcgluKinase_fam"/>
</dbReference>
<dbReference type="InterPro" id="IPR001048">
    <property type="entry name" value="Asp/Glu/Uridylate_kinase"/>
</dbReference>
<dbReference type="InterPro" id="IPR037529">
    <property type="entry name" value="LysZ"/>
</dbReference>
<dbReference type="NCBIfam" id="TIGR00761">
    <property type="entry name" value="argB"/>
    <property type="match status" value="1"/>
</dbReference>
<dbReference type="NCBIfam" id="NF010660">
    <property type="entry name" value="PRK14058.1-2"/>
    <property type="match status" value="1"/>
</dbReference>
<dbReference type="PANTHER" id="PTHR23342">
    <property type="entry name" value="N-ACETYLGLUTAMATE SYNTHASE"/>
    <property type="match status" value="1"/>
</dbReference>
<dbReference type="PANTHER" id="PTHR23342:SF0">
    <property type="entry name" value="N-ACETYLGLUTAMATE SYNTHASE, MITOCHONDRIAL"/>
    <property type="match status" value="1"/>
</dbReference>
<dbReference type="Pfam" id="PF00696">
    <property type="entry name" value="AA_kinase"/>
    <property type="match status" value="1"/>
</dbReference>
<dbReference type="PIRSF" id="PIRSF000728">
    <property type="entry name" value="NAGK"/>
    <property type="match status" value="1"/>
</dbReference>
<dbReference type="SUPFAM" id="SSF53633">
    <property type="entry name" value="Carbamate kinase-like"/>
    <property type="match status" value="1"/>
</dbReference>
<protein>
    <recommendedName>
        <fullName evidence="1">Putative [LysW]-aminoadipate/[LysW]-glutamate kinase</fullName>
        <ecNumber evidence="1">2.7.2.17</ecNumber>
        <ecNumber evidence="1">2.7.2.19</ecNumber>
    </recommendedName>
</protein>
<organism>
    <name type="scientific">Pyrococcus abyssi (strain GE5 / Orsay)</name>
    <dbReference type="NCBI Taxonomy" id="272844"/>
    <lineage>
        <taxon>Archaea</taxon>
        <taxon>Methanobacteriati</taxon>
        <taxon>Methanobacteriota</taxon>
        <taxon>Thermococci</taxon>
        <taxon>Thermococcales</taxon>
        <taxon>Thermococcaceae</taxon>
        <taxon>Pyrococcus</taxon>
    </lineage>
</organism>
<gene>
    <name evidence="1" type="primary">lysZ</name>
    <name type="synonym">argB</name>
    <name type="ordered locus">PYRAB04420</name>
    <name type="ORF">PAB0292</name>
</gene>
<keyword id="KW-0028">Amino-acid biosynthesis</keyword>
<keyword id="KW-0055">Arginine biosynthesis</keyword>
<keyword id="KW-0067">ATP-binding</keyword>
<keyword id="KW-0963">Cytoplasm</keyword>
<keyword id="KW-0418">Kinase</keyword>
<keyword id="KW-0457">Lysine biosynthesis</keyword>
<keyword id="KW-0547">Nucleotide-binding</keyword>
<keyword id="KW-0808">Transferase</keyword>
<evidence type="ECO:0000255" key="1">
    <source>
        <dbReference type="HAMAP-Rule" id="MF_02082"/>
    </source>
</evidence>
<evidence type="ECO:0000305" key="2"/>
<comment type="function">
    <text evidence="1">Involved in both the arginine and lysine biosynthetic pathways. Phosphorylates the LysW-bound precursors glutamate (for arginine biosynthesis), respectively alpha-aminoadipate (for lysine biosynthesis).</text>
</comment>
<comment type="catalytic activity">
    <reaction evidence="1">
        <text>[amino-group carrier protein]-C-terminal-N-(1,4-dicarboxybutan-1-yl)-L-glutamine + ATP = [amino-group carrier protein]-C-terminal-N-(1-carboxy-5-phosphooxy-5-oxopentan-1-yl)-L-glutamine + ADP</text>
        <dbReference type="Rhea" id="RHEA:41944"/>
        <dbReference type="Rhea" id="RHEA-COMP:9694"/>
        <dbReference type="Rhea" id="RHEA-COMP:9712"/>
        <dbReference type="ChEBI" id="CHEBI:30616"/>
        <dbReference type="ChEBI" id="CHEBI:78499"/>
        <dbReference type="ChEBI" id="CHEBI:78503"/>
        <dbReference type="ChEBI" id="CHEBI:456216"/>
        <dbReference type="EC" id="2.7.2.17"/>
    </reaction>
</comment>
<comment type="catalytic activity">
    <reaction evidence="1">
        <text>[amino-group carrier protein]-C-terminal-gamma-(L-glutamyl)-L-glutamate + ATP = [amino-group carrier protein]-C-terminal-gamma-(5-phospho-L-glutamyl)-L-glutamate + ADP</text>
        <dbReference type="Rhea" id="RHEA:52632"/>
        <dbReference type="Rhea" id="RHEA-COMP:13311"/>
        <dbReference type="Rhea" id="RHEA-COMP:13313"/>
        <dbReference type="ChEBI" id="CHEBI:30616"/>
        <dbReference type="ChEBI" id="CHEBI:136714"/>
        <dbReference type="ChEBI" id="CHEBI:136717"/>
        <dbReference type="ChEBI" id="CHEBI:456216"/>
        <dbReference type="EC" id="2.7.2.19"/>
    </reaction>
</comment>
<comment type="pathway">
    <text evidence="1">Amino-acid biosynthesis; L-lysine biosynthesis via AAA pathway; L-lysine from L-alpha-aminoadipate (Thermus route): step 2/5.</text>
</comment>
<comment type="pathway">
    <text evidence="1">Amino-acid biosynthesis; L-arginine biosynthesis.</text>
</comment>
<comment type="subcellular location">
    <subcellularLocation>
        <location evidence="1">Cytoplasm</location>
    </subcellularLocation>
</comment>
<comment type="similarity">
    <text evidence="1">Belongs to the acetylglutamate kinase family. LysZ subfamily.</text>
</comment>
<comment type="sequence caution" evidence="2">
    <conflict type="erroneous initiation">
        <sequence resource="EMBL-CDS" id="CAB49364"/>
    </conflict>
    <text>Extended N-terminus.</text>
</comment>
<proteinExistence type="inferred from homology"/>
<reference key="1">
    <citation type="journal article" date="2003" name="Mol. Microbiol.">
        <title>An integrated analysis of the genome of the hyperthermophilic archaeon Pyrococcus abyssi.</title>
        <authorList>
            <person name="Cohen G.N."/>
            <person name="Barbe V."/>
            <person name="Flament D."/>
            <person name="Galperin M."/>
            <person name="Heilig R."/>
            <person name="Lecompte O."/>
            <person name="Poch O."/>
            <person name="Prieur D."/>
            <person name="Querellou J."/>
            <person name="Ripp R."/>
            <person name="Thierry J.-C."/>
            <person name="Van der Oost J."/>
            <person name="Weissenbach J."/>
            <person name="Zivanovic Y."/>
            <person name="Forterre P."/>
        </authorList>
    </citation>
    <scope>NUCLEOTIDE SEQUENCE [LARGE SCALE GENOMIC DNA]</scope>
    <source>
        <strain>GE5 / Orsay</strain>
    </source>
</reference>
<reference key="2">
    <citation type="journal article" date="2012" name="Curr. Microbiol.">
        <title>Re-annotation of two hyperthermophilic archaea Pyrococcus abyssi GE5 and Pyrococcus furiosus DSM 3638.</title>
        <authorList>
            <person name="Gao J."/>
            <person name="Wang J."/>
        </authorList>
    </citation>
    <scope>GENOME REANNOTATION</scope>
    <source>
        <strain>GE5 / Orsay</strain>
    </source>
</reference>
<name>LYSZ_PYRAB</name>
<sequence length="245" mass="26866">MRVIKVGGSVVPMLDKILDTSSLHGNSIIVHGGSRYVDEMARKLGVKVERLVSPSGVMFRRTTRRVLDVYVAALMRANRELVSFLRERGIDAIGVSGLDGVVLAKRKKLVKAVVNGKVIAIRDDYSGVIKSINVTLLKNYLKVGIPVIASIAYDPEENVPLNVDGDKVAYHVAIAMKAKELRFLSDTAFLIDGNVVERIPLEDFDEYLRYAGGGMKKKLMMARKALESGVKKVVIEGLNGRTVIS</sequence>
<accession>Q9V1I5</accession>
<accession>G8ZGE5</accession>
<feature type="chain" id="PRO_0000112699" description="Putative [LysW]-aminoadipate/[LysW]-glutamate kinase">
    <location>
        <begin position="1"/>
        <end position="245"/>
    </location>
</feature>
<feature type="binding site" evidence="1">
    <location>
        <position position="60"/>
    </location>
    <ligand>
        <name>substrate</name>
    </ligand>
</feature>
<feature type="binding site" evidence="1">
    <location>
        <position position="162"/>
    </location>
    <ligand>
        <name>substrate</name>
    </ligand>
</feature>
<feature type="site" description="Transition state stabilizer" evidence="1">
    <location>
        <position position="5"/>
    </location>
</feature>
<feature type="site" description="Transition state stabilizer" evidence="1">
    <location>
        <position position="218"/>
    </location>
</feature>